<proteinExistence type="inferred from homology"/>
<name>YAAA_SHIDS</name>
<feature type="chain" id="PRO_0000262061" description="UPF0246 protein YaaA">
    <location>
        <begin position="1"/>
        <end position="258"/>
    </location>
</feature>
<evidence type="ECO:0000255" key="1">
    <source>
        <dbReference type="HAMAP-Rule" id="MF_00652"/>
    </source>
</evidence>
<reference key="1">
    <citation type="journal article" date="2005" name="Nucleic Acids Res.">
        <title>Genome dynamics and diversity of Shigella species, the etiologic agents of bacillary dysentery.</title>
        <authorList>
            <person name="Yang F."/>
            <person name="Yang J."/>
            <person name="Zhang X."/>
            <person name="Chen L."/>
            <person name="Jiang Y."/>
            <person name="Yan Y."/>
            <person name="Tang X."/>
            <person name="Wang J."/>
            <person name="Xiong Z."/>
            <person name="Dong J."/>
            <person name="Xue Y."/>
            <person name="Zhu Y."/>
            <person name="Xu X."/>
            <person name="Sun L."/>
            <person name="Chen S."/>
            <person name="Nie H."/>
            <person name="Peng J."/>
            <person name="Xu J."/>
            <person name="Wang Y."/>
            <person name="Yuan Z."/>
            <person name="Wen Y."/>
            <person name="Yao Z."/>
            <person name="Shen Y."/>
            <person name="Qiang B."/>
            <person name="Hou Y."/>
            <person name="Yu J."/>
            <person name="Jin Q."/>
        </authorList>
    </citation>
    <scope>NUCLEOTIDE SEQUENCE [LARGE SCALE GENOMIC DNA]</scope>
    <source>
        <strain>Sd197</strain>
    </source>
</reference>
<keyword id="KW-1185">Reference proteome</keyword>
<dbReference type="EMBL" id="CP000034">
    <property type="protein sequence ID" value="ABB60246.1"/>
    <property type="molecule type" value="Genomic_DNA"/>
</dbReference>
<dbReference type="RefSeq" id="WP_000906209.1">
    <property type="nucleotide sequence ID" value="NC_007606.1"/>
</dbReference>
<dbReference type="RefSeq" id="YP_401734.1">
    <property type="nucleotide sequence ID" value="NC_007606.1"/>
</dbReference>
<dbReference type="SMR" id="Q32KB2"/>
<dbReference type="STRING" id="300267.SDY_0006"/>
<dbReference type="EnsemblBacteria" id="ABB60246">
    <property type="protein sequence ID" value="ABB60246"/>
    <property type="gene ID" value="SDY_0006"/>
</dbReference>
<dbReference type="KEGG" id="sdy:SDY_0006"/>
<dbReference type="PATRIC" id="fig|300267.13.peg.5"/>
<dbReference type="HOGENOM" id="CLU_061989_0_0_6"/>
<dbReference type="Proteomes" id="UP000002716">
    <property type="component" value="Chromosome"/>
</dbReference>
<dbReference type="GO" id="GO:0005829">
    <property type="term" value="C:cytosol"/>
    <property type="evidence" value="ECO:0007669"/>
    <property type="project" value="TreeGrafter"/>
</dbReference>
<dbReference type="GO" id="GO:0033194">
    <property type="term" value="P:response to hydroperoxide"/>
    <property type="evidence" value="ECO:0007669"/>
    <property type="project" value="TreeGrafter"/>
</dbReference>
<dbReference type="HAMAP" id="MF_00652">
    <property type="entry name" value="UPF0246"/>
    <property type="match status" value="1"/>
</dbReference>
<dbReference type="InterPro" id="IPR005583">
    <property type="entry name" value="YaaA"/>
</dbReference>
<dbReference type="NCBIfam" id="NF002541">
    <property type="entry name" value="PRK02101.1-1"/>
    <property type="match status" value="1"/>
</dbReference>
<dbReference type="NCBIfam" id="NF002542">
    <property type="entry name" value="PRK02101.1-3"/>
    <property type="match status" value="1"/>
</dbReference>
<dbReference type="PANTHER" id="PTHR30283:SF4">
    <property type="entry name" value="PEROXIDE STRESS RESISTANCE PROTEIN YAAA"/>
    <property type="match status" value="1"/>
</dbReference>
<dbReference type="PANTHER" id="PTHR30283">
    <property type="entry name" value="PEROXIDE STRESS RESPONSE PROTEIN YAAA"/>
    <property type="match status" value="1"/>
</dbReference>
<dbReference type="Pfam" id="PF03883">
    <property type="entry name" value="H2O2_YaaD"/>
    <property type="match status" value="1"/>
</dbReference>
<sequence>MLILISPAKTLDYQSPLTTTRYTLPELLDNSQQLIHEARKLTPPQISTLMRISDKLAGINAARFHDWQPDFTPENARQAILAFKGDVYTGLQAETFSEDDFDFTQQHLRMLSGLYGVLRPLDLMQPYRLEMGIRLENARGKDLYQFWGDIITNKLNEALAAQGDNVVINLASDEYFKSVKPKKLNAEIIKPVFLDEKNGKFKIISFYAKKARGLMSRFIIENRLTKPEQLTGFNSEGYFFDEASSSNGELVFKRYEQR</sequence>
<comment type="similarity">
    <text evidence="1">Belongs to the UPF0246 family.</text>
</comment>
<accession>Q32KB2</accession>
<gene>
    <name evidence="1" type="primary">yaaA</name>
    <name type="ordered locus">SDY_0006</name>
</gene>
<protein>
    <recommendedName>
        <fullName evidence="1">UPF0246 protein YaaA</fullName>
    </recommendedName>
</protein>
<organism>
    <name type="scientific">Shigella dysenteriae serotype 1 (strain Sd197)</name>
    <dbReference type="NCBI Taxonomy" id="300267"/>
    <lineage>
        <taxon>Bacteria</taxon>
        <taxon>Pseudomonadati</taxon>
        <taxon>Pseudomonadota</taxon>
        <taxon>Gammaproteobacteria</taxon>
        <taxon>Enterobacterales</taxon>
        <taxon>Enterobacteriaceae</taxon>
        <taxon>Shigella</taxon>
    </lineage>
</organism>